<sequence length="876" mass="100156">MKYMTADEIRQSFLKYFESKGHTIVKSASIIPENDPTLLFVNAGMVPFKNVFLGLEERPYKRAASCQKVFRVSGKHNDLENVGYTPRHHTFFEMLGNFSFGDYFKKEAIEFAWEYLTEHLEIPKEKLLVSVFEEDDEAFEIWNKHIGLDESKIKRMGYKDNFWSMGDTGPCGPSSEIYYDRGEKFGNPEFGAEDDFRYLEIWNLVFMQYNRDEKGVLHPLPNPSIDTGMGLERIASVLQGVDSNYDTDLFKPIIQFAEEVSGKEYGKNEKDDIAMRVIADHLRAITFLISDGVLPANEGRGYVLRRIIRRALRYGKNLGIEKPFLYEGVDVVIEKMKTAYPELIQNRSFIKTITKSEEEKFIKTLKRSMDILYQMIEQARKENRRHLTGEETFKLYDTYGFPIDLMEEILKDEGFTFDLIEFHNLLEEQKERARKSWKSQSKEIKPVYLTLKNKLPENQFVGYETLTSENSKVLAIIKGDQLVDTAKEGEDIEIVLDITPFYPEKGGQIGDRGIIEGDEFLFEVLDTQTPVDGLIVHKGKVLFGSVKEGAYVRAKTDKERRENIMRHHTATHLLHAALRNVLGDHVKQAGSLVSDEYLRFDFTHFESMTDEELKAVEELVNREIMKNEEVVCQEMQYEEALKSGAMAIFEEKYADVVRVISAGISKELCGGTHVKRTGDIGYFKILSESAVSSGTRRIEAVAGIKAVEKGLQEHYIIKDLSRLLTAKEDQLLDRVLKLQNQIKEKEREIENLRKKLALSNINENLNIIEKEGFKVAYVSVENLNPNELREIADHLRQKLGKSVILVASKDAEKQKVNFVVAVSKELSENYKAGDIVKKVASAANGSGGGRPDFAQGGINDTSKLSQLFEEFKKIFS</sequence>
<protein>
    <recommendedName>
        <fullName evidence="1">Alanine--tRNA ligase</fullName>
        <ecNumber evidence="1">6.1.1.7</ecNumber>
    </recommendedName>
    <alternativeName>
        <fullName evidence="1">Alanyl-tRNA synthetase</fullName>
        <shortName evidence="1">AlaRS</shortName>
    </alternativeName>
</protein>
<keyword id="KW-0030">Aminoacyl-tRNA synthetase</keyword>
<keyword id="KW-0067">ATP-binding</keyword>
<keyword id="KW-0963">Cytoplasm</keyword>
<keyword id="KW-0436">Ligase</keyword>
<keyword id="KW-0479">Metal-binding</keyword>
<keyword id="KW-0547">Nucleotide-binding</keyword>
<keyword id="KW-0648">Protein biosynthesis</keyword>
<keyword id="KW-0694">RNA-binding</keyword>
<keyword id="KW-0820">tRNA-binding</keyword>
<keyword id="KW-0862">Zinc</keyword>
<dbReference type="EC" id="6.1.1.7" evidence="1"/>
<dbReference type="EMBL" id="CP001080">
    <property type="protein sequence ID" value="ACD65791.1"/>
    <property type="molecule type" value="Genomic_DNA"/>
</dbReference>
<dbReference type="RefSeq" id="WP_012458881.1">
    <property type="nucleotide sequence ID" value="NC_010730.1"/>
</dbReference>
<dbReference type="SMR" id="B2V709"/>
<dbReference type="STRING" id="436114.SYO3AOP1_0146"/>
<dbReference type="KEGG" id="sul:SYO3AOP1_0146"/>
<dbReference type="eggNOG" id="COG0013">
    <property type="taxonomic scope" value="Bacteria"/>
</dbReference>
<dbReference type="HOGENOM" id="CLU_004485_1_1_0"/>
<dbReference type="GO" id="GO:0005829">
    <property type="term" value="C:cytosol"/>
    <property type="evidence" value="ECO:0007669"/>
    <property type="project" value="TreeGrafter"/>
</dbReference>
<dbReference type="GO" id="GO:0004813">
    <property type="term" value="F:alanine-tRNA ligase activity"/>
    <property type="evidence" value="ECO:0007669"/>
    <property type="project" value="UniProtKB-UniRule"/>
</dbReference>
<dbReference type="GO" id="GO:0002161">
    <property type="term" value="F:aminoacyl-tRNA deacylase activity"/>
    <property type="evidence" value="ECO:0007669"/>
    <property type="project" value="TreeGrafter"/>
</dbReference>
<dbReference type="GO" id="GO:0005524">
    <property type="term" value="F:ATP binding"/>
    <property type="evidence" value="ECO:0007669"/>
    <property type="project" value="UniProtKB-UniRule"/>
</dbReference>
<dbReference type="GO" id="GO:0000049">
    <property type="term" value="F:tRNA binding"/>
    <property type="evidence" value="ECO:0007669"/>
    <property type="project" value="UniProtKB-KW"/>
</dbReference>
<dbReference type="GO" id="GO:0008270">
    <property type="term" value="F:zinc ion binding"/>
    <property type="evidence" value="ECO:0007669"/>
    <property type="project" value="UniProtKB-UniRule"/>
</dbReference>
<dbReference type="GO" id="GO:0006419">
    <property type="term" value="P:alanyl-tRNA aminoacylation"/>
    <property type="evidence" value="ECO:0007669"/>
    <property type="project" value="UniProtKB-UniRule"/>
</dbReference>
<dbReference type="CDD" id="cd00673">
    <property type="entry name" value="AlaRS_core"/>
    <property type="match status" value="1"/>
</dbReference>
<dbReference type="FunFam" id="2.40.30.130:FF:000001">
    <property type="entry name" value="Alanine--tRNA ligase"/>
    <property type="match status" value="1"/>
</dbReference>
<dbReference type="FunFam" id="3.10.310.40:FF:000001">
    <property type="entry name" value="Alanine--tRNA ligase"/>
    <property type="match status" value="1"/>
</dbReference>
<dbReference type="FunFam" id="3.30.54.20:FF:000001">
    <property type="entry name" value="Alanine--tRNA ligase"/>
    <property type="match status" value="1"/>
</dbReference>
<dbReference type="FunFam" id="3.30.930.10:FF:000004">
    <property type="entry name" value="Alanine--tRNA ligase"/>
    <property type="match status" value="1"/>
</dbReference>
<dbReference type="FunFam" id="3.30.980.10:FF:000004">
    <property type="entry name" value="Alanine--tRNA ligase, cytoplasmic"/>
    <property type="match status" value="1"/>
</dbReference>
<dbReference type="Gene3D" id="2.40.30.130">
    <property type="match status" value="1"/>
</dbReference>
<dbReference type="Gene3D" id="3.10.310.40">
    <property type="match status" value="1"/>
</dbReference>
<dbReference type="Gene3D" id="3.30.54.20">
    <property type="match status" value="1"/>
</dbReference>
<dbReference type="Gene3D" id="6.10.250.550">
    <property type="match status" value="1"/>
</dbReference>
<dbReference type="Gene3D" id="3.30.930.10">
    <property type="entry name" value="Bira Bifunctional Protein, Domain 2"/>
    <property type="match status" value="1"/>
</dbReference>
<dbReference type="Gene3D" id="3.30.980.10">
    <property type="entry name" value="Threonyl-trna Synthetase, Chain A, domain 2"/>
    <property type="match status" value="1"/>
</dbReference>
<dbReference type="HAMAP" id="MF_00036_B">
    <property type="entry name" value="Ala_tRNA_synth_B"/>
    <property type="match status" value="1"/>
</dbReference>
<dbReference type="InterPro" id="IPR006195">
    <property type="entry name" value="aa-tRNA-synth_II"/>
</dbReference>
<dbReference type="InterPro" id="IPR045864">
    <property type="entry name" value="aa-tRNA-synth_II/BPL/LPL"/>
</dbReference>
<dbReference type="InterPro" id="IPR002318">
    <property type="entry name" value="Ala-tRNA-lgiase_IIc"/>
</dbReference>
<dbReference type="InterPro" id="IPR018162">
    <property type="entry name" value="Ala-tRNA-ligase_IIc_anticod-bd"/>
</dbReference>
<dbReference type="InterPro" id="IPR018165">
    <property type="entry name" value="Ala-tRNA-synth_IIc_core"/>
</dbReference>
<dbReference type="InterPro" id="IPR018164">
    <property type="entry name" value="Ala-tRNA-synth_IIc_N"/>
</dbReference>
<dbReference type="InterPro" id="IPR050058">
    <property type="entry name" value="Ala-tRNA_ligase"/>
</dbReference>
<dbReference type="InterPro" id="IPR023033">
    <property type="entry name" value="Ala_tRNA_ligase_euk/bac"/>
</dbReference>
<dbReference type="InterPro" id="IPR003156">
    <property type="entry name" value="DHHA1_dom"/>
</dbReference>
<dbReference type="InterPro" id="IPR018163">
    <property type="entry name" value="Thr/Ala-tRNA-synth_IIc_edit"/>
</dbReference>
<dbReference type="InterPro" id="IPR009000">
    <property type="entry name" value="Transl_B-barrel_sf"/>
</dbReference>
<dbReference type="InterPro" id="IPR012947">
    <property type="entry name" value="tRNA_SAD"/>
</dbReference>
<dbReference type="NCBIfam" id="TIGR00344">
    <property type="entry name" value="alaS"/>
    <property type="match status" value="1"/>
</dbReference>
<dbReference type="PANTHER" id="PTHR11777:SF9">
    <property type="entry name" value="ALANINE--TRNA LIGASE, CYTOPLASMIC"/>
    <property type="match status" value="1"/>
</dbReference>
<dbReference type="PANTHER" id="PTHR11777">
    <property type="entry name" value="ALANYL-TRNA SYNTHETASE"/>
    <property type="match status" value="1"/>
</dbReference>
<dbReference type="Pfam" id="PF02272">
    <property type="entry name" value="DHHA1"/>
    <property type="match status" value="1"/>
</dbReference>
<dbReference type="Pfam" id="PF01411">
    <property type="entry name" value="tRNA-synt_2c"/>
    <property type="match status" value="1"/>
</dbReference>
<dbReference type="Pfam" id="PF07973">
    <property type="entry name" value="tRNA_SAD"/>
    <property type="match status" value="1"/>
</dbReference>
<dbReference type="PRINTS" id="PR00980">
    <property type="entry name" value="TRNASYNTHALA"/>
</dbReference>
<dbReference type="SMART" id="SM00863">
    <property type="entry name" value="tRNA_SAD"/>
    <property type="match status" value="1"/>
</dbReference>
<dbReference type="SUPFAM" id="SSF55681">
    <property type="entry name" value="Class II aaRS and biotin synthetases"/>
    <property type="match status" value="1"/>
</dbReference>
<dbReference type="SUPFAM" id="SSF101353">
    <property type="entry name" value="Putative anticodon-binding domain of alanyl-tRNA synthetase (AlaRS)"/>
    <property type="match status" value="1"/>
</dbReference>
<dbReference type="SUPFAM" id="SSF55186">
    <property type="entry name" value="ThrRS/AlaRS common domain"/>
    <property type="match status" value="1"/>
</dbReference>
<dbReference type="SUPFAM" id="SSF50447">
    <property type="entry name" value="Translation proteins"/>
    <property type="match status" value="1"/>
</dbReference>
<dbReference type="PROSITE" id="PS50860">
    <property type="entry name" value="AA_TRNA_LIGASE_II_ALA"/>
    <property type="match status" value="1"/>
</dbReference>
<comment type="function">
    <text evidence="1">Catalyzes the attachment of alanine to tRNA(Ala) in a two-step reaction: alanine is first activated by ATP to form Ala-AMP and then transferred to the acceptor end of tRNA(Ala). Also edits incorrectly charged Ser-tRNA(Ala) and Gly-tRNA(Ala) via its editing domain.</text>
</comment>
<comment type="catalytic activity">
    <reaction evidence="1">
        <text>tRNA(Ala) + L-alanine + ATP = L-alanyl-tRNA(Ala) + AMP + diphosphate</text>
        <dbReference type="Rhea" id="RHEA:12540"/>
        <dbReference type="Rhea" id="RHEA-COMP:9657"/>
        <dbReference type="Rhea" id="RHEA-COMP:9923"/>
        <dbReference type="ChEBI" id="CHEBI:30616"/>
        <dbReference type="ChEBI" id="CHEBI:33019"/>
        <dbReference type="ChEBI" id="CHEBI:57972"/>
        <dbReference type="ChEBI" id="CHEBI:78442"/>
        <dbReference type="ChEBI" id="CHEBI:78497"/>
        <dbReference type="ChEBI" id="CHEBI:456215"/>
        <dbReference type="EC" id="6.1.1.7"/>
    </reaction>
</comment>
<comment type="cofactor">
    <cofactor evidence="1">
        <name>Zn(2+)</name>
        <dbReference type="ChEBI" id="CHEBI:29105"/>
    </cofactor>
    <text evidence="1">Binds 1 zinc ion per subunit.</text>
</comment>
<comment type="subcellular location">
    <subcellularLocation>
        <location evidence="1">Cytoplasm</location>
    </subcellularLocation>
</comment>
<comment type="domain">
    <text evidence="1">Consists of three domains; the N-terminal catalytic domain, the editing domain and the C-terminal C-Ala domain. The editing domain removes incorrectly charged amino acids, while the C-Ala domain, along with tRNA(Ala), serves as a bridge to cooperatively bring together the editing and aminoacylation centers thus stimulating deacylation of misacylated tRNAs.</text>
</comment>
<comment type="similarity">
    <text evidence="1">Belongs to the class-II aminoacyl-tRNA synthetase family.</text>
</comment>
<name>SYA_SULSY</name>
<organism>
    <name type="scientific">Sulfurihydrogenibium sp. (strain YO3AOP1)</name>
    <dbReference type="NCBI Taxonomy" id="436114"/>
    <lineage>
        <taxon>Bacteria</taxon>
        <taxon>Pseudomonadati</taxon>
        <taxon>Aquificota</taxon>
        <taxon>Aquificia</taxon>
        <taxon>Aquificales</taxon>
        <taxon>Hydrogenothermaceae</taxon>
        <taxon>Sulfurihydrogenibium</taxon>
    </lineage>
</organism>
<evidence type="ECO:0000255" key="1">
    <source>
        <dbReference type="HAMAP-Rule" id="MF_00036"/>
    </source>
</evidence>
<reference key="1">
    <citation type="journal article" date="2009" name="J. Bacteriol.">
        <title>Complete and draft genome sequences of six members of the Aquificales.</title>
        <authorList>
            <person name="Reysenbach A.-L."/>
            <person name="Hamamura N."/>
            <person name="Podar M."/>
            <person name="Griffiths E."/>
            <person name="Ferreira S."/>
            <person name="Hochstein R."/>
            <person name="Heidelberg J."/>
            <person name="Johnson J."/>
            <person name="Mead D."/>
            <person name="Pohorille A."/>
            <person name="Sarmiento M."/>
            <person name="Schweighofer K."/>
            <person name="Seshadri R."/>
            <person name="Voytek M.A."/>
        </authorList>
    </citation>
    <scope>NUCLEOTIDE SEQUENCE [LARGE SCALE GENOMIC DNA]</scope>
    <source>
        <strain>YO3AOP1</strain>
    </source>
</reference>
<gene>
    <name evidence="1" type="primary">alaS</name>
    <name type="ordered locus">SYO3AOP1_0146</name>
</gene>
<proteinExistence type="inferred from homology"/>
<feature type="chain" id="PRO_0000347832" description="Alanine--tRNA ligase">
    <location>
        <begin position="1"/>
        <end position="876"/>
    </location>
</feature>
<feature type="binding site" evidence="1">
    <location>
        <position position="568"/>
    </location>
    <ligand>
        <name>Zn(2+)</name>
        <dbReference type="ChEBI" id="CHEBI:29105"/>
    </ligand>
</feature>
<feature type="binding site" evidence="1">
    <location>
        <position position="572"/>
    </location>
    <ligand>
        <name>Zn(2+)</name>
        <dbReference type="ChEBI" id="CHEBI:29105"/>
    </ligand>
</feature>
<feature type="binding site" evidence="1">
    <location>
        <position position="669"/>
    </location>
    <ligand>
        <name>Zn(2+)</name>
        <dbReference type="ChEBI" id="CHEBI:29105"/>
    </ligand>
</feature>
<feature type="binding site" evidence="1">
    <location>
        <position position="673"/>
    </location>
    <ligand>
        <name>Zn(2+)</name>
        <dbReference type="ChEBI" id="CHEBI:29105"/>
    </ligand>
</feature>
<accession>B2V709</accession>